<keyword id="KW-1185">Reference proteome</keyword>
<accession>B7LGQ2</accession>
<reference key="1">
    <citation type="journal article" date="2009" name="PLoS Genet.">
        <title>Organised genome dynamics in the Escherichia coli species results in highly diverse adaptive paths.</title>
        <authorList>
            <person name="Touchon M."/>
            <person name="Hoede C."/>
            <person name="Tenaillon O."/>
            <person name="Barbe V."/>
            <person name="Baeriswyl S."/>
            <person name="Bidet P."/>
            <person name="Bingen E."/>
            <person name="Bonacorsi S."/>
            <person name="Bouchier C."/>
            <person name="Bouvet O."/>
            <person name="Calteau A."/>
            <person name="Chiapello H."/>
            <person name="Clermont O."/>
            <person name="Cruveiller S."/>
            <person name="Danchin A."/>
            <person name="Diard M."/>
            <person name="Dossat C."/>
            <person name="Karoui M.E."/>
            <person name="Frapy E."/>
            <person name="Garry L."/>
            <person name="Ghigo J.M."/>
            <person name="Gilles A.M."/>
            <person name="Johnson J."/>
            <person name="Le Bouguenec C."/>
            <person name="Lescat M."/>
            <person name="Mangenot S."/>
            <person name="Martinez-Jehanne V."/>
            <person name="Matic I."/>
            <person name="Nassif X."/>
            <person name="Oztas S."/>
            <person name="Petit M.A."/>
            <person name="Pichon C."/>
            <person name="Rouy Z."/>
            <person name="Ruf C.S."/>
            <person name="Schneider D."/>
            <person name="Tourret J."/>
            <person name="Vacherie B."/>
            <person name="Vallenet D."/>
            <person name="Medigue C."/>
            <person name="Rocha E.P.C."/>
            <person name="Denamur E."/>
        </authorList>
    </citation>
    <scope>NUCLEOTIDE SEQUENCE [LARGE SCALE GENOMIC DNA]</scope>
    <source>
        <strain>55989 / EAEC</strain>
    </source>
</reference>
<name>YAEP_ECO55</name>
<organism>
    <name type="scientific">Escherichia coli (strain 55989 / EAEC)</name>
    <dbReference type="NCBI Taxonomy" id="585055"/>
    <lineage>
        <taxon>Bacteria</taxon>
        <taxon>Pseudomonadati</taxon>
        <taxon>Pseudomonadota</taxon>
        <taxon>Gammaproteobacteria</taxon>
        <taxon>Enterobacterales</taxon>
        <taxon>Enterobacteriaceae</taxon>
        <taxon>Escherichia</taxon>
    </lineage>
</organism>
<sequence>MEKYCELIRKRYAEIASGDLGYVPDALGCVLKVLNEMAADDALSEAVREKAAYAAANLLVSDYVNE</sequence>
<evidence type="ECO:0000255" key="1">
    <source>
        <dbReference type="HAMAP-Rule" id="MF_01064"/>
    </source>
</evidence>
<proteinExistence type="inferred from homology"/>
<protein>
    <recommendedName>
        <fullName evidence="1">UPF0253 protein YaeP</fullName>
    </recommendedName>
</protein>
<gene>
    <name evidence="1" type="primary">yaeP</name>
    <name type="ordered locus">EC55989_0184</name>
</gene>
<feature type="chain" id="PRO_1000149727" description="UPF0253 protein YaeP">
    <location>
        <begin position="1"/>
        <end position="66"/>
    </location>
</feature>
<comment type="similarity">
    <text evidence="1">Belongs to the UPF0253 family.</text>
</comment>
<dbReference type="EMBL" id="CU928145">
    <property type="protein sequence ID" value="CAU96070.1"/>
    <property type="molecule type" value="Genomic_DNA"/>
</dbReference>
<dbReference type="RefSeq" id="WP_000417058.1">
    <property type="nucleotide sequence ID" value="NZ_CP028304.1"/>
</dbReference>
<dbReference type="SMR" id="B7LGQ2"/>
<dbReference type="KEGG" id="eck:EC55989_0184"/>
<dbReference type="HOGENOM" id="CLU_190008_0_0_6"/>
<dbReference type="Proteomes" id="UP000000746">
    <property type="component" value="Chromosome"/>
</dbReference>
<dbReference type="HAMAP" id="MF_01064">
    <property type="entry name" value="UPF0253"/>
    <property type="match status" value="1"/>
</dbReference>
<dbReference type="InterPro" id="IPR009624">
    <property type="entry name" value="UPF0253"/>
</dbReference>
<dbReference type="NCBIfam" id="NF003436">
    <property type="entry name" value="PRK04964.1"/>
    <property type="match status" value="1"/>
</dbReference>
<dbReference type="Pfam" id="PF06786">
    <property type="entry name" value="UPF0253"/>
    <property type="match status" value="1"/>
</dbReference>